<organism>
    <name type="scientific">Buchnera aphidicola subsp. Acyrthosiphon pisum (strain Tuc7)</name>
    <dbReference type="NCBI Taxonomy" id="561501"/>
    <lineage>
        <taxon>Bacteria</taxon>
        <taxon>Pseudomonadati</taxon>
        <taxon>Pseudomonadota</taxon>
        <taxon>Gammaproteobacteria</taxon>
        <taxon>Enterobacterales</taxon>
        <taxon>Erwiniaceae</taxon>
        <taxon>Buchnera</taxon>
    </lineage>
</organism>
<sequence>MRIEEDIKLGFKDVLIRPKRSILKSRSQVNLARCFSFKYSASIWSGIPIIAANMDTIGTFEMVKSLSKFNILTAVHKYYSFEEWKNFVCLSSKEILNHVIVSIGTSNIDFLKIKKIFLLSSELKYICIDVANGYSEHIVSFLKLVRDYFPDKIICAGNVVTGEMVEELILSGADIVKVGIGPGSVCTTRVKTGVGYPQLSAIIECADAAHGLNGQIISDGGCTVSGDIAKAFGGGADFVMLGGMLSGHKECSGDIIEEKSKKYMIFYGMSSVSAMQRYEGKIAGYRASEGKTVKIPFRGSVDSTIRDILGGLRSSCTYVGAEKLKELTKRTTFIRVTEQENCIFNAFKE</sequence>
<dbReference type="EC" id="1.7.1.7" evidence="1"/>
<dbReference type="EMBL" id="CP001158">
    <property type="protein sequence ID" value="ACL30023.1"/>
    <property type="molecule type" value="Genomic_DNA"/>
</dbReference>
<dbReference type="RefSeq" id="WP_012619470.1">
    <property type="nucleotide sequence ID" value="NC_011834.1"/>
</dbReference>
<dbReference type="SMR" id="B8D7A8"/>
<dbReference type="KEGG" id="bau:BUAPTUC7_203"/>
<dbReference type="HOGENOM" id="CLU_022552_5_3_6"/>
<dbReference type="GO" id="GO:0005829">
    <property type="term" value="C:cytosol"/>
    <property type="evidence" value="ECO:0007669"/>
    <property type="project" value="TreeGrafter"/>
</dbReference>
<dbReference type="GO" id="GO:1902560">
    <property type="term" value="C:GMP reductase complex"/>
    <property type="evidence" value="ECO:0007669"/>
    <property type="project" value="InterPro"/>
</dbReference>
<dbReference type="GO" id="GO:0003920">
    <property type="term" value="F:GMP reductase activity"/>
    <property type="evidence" value="ECO:0007669"/>
    <property type="project" value="UniProtKB-UniRule"/>
</dbReference>
<dbReference type="GO" id="GO:0046872">
    <property type="term" value="F:metal ion binding"/>
    <property type="evidence" value="ECO:0007669"/>
    <property type="project" value="UniProtKB-KW"/>
</dbReference>
<dbReference type="GO" id="GO:0006163">
    <property type="term" value="P:purine nucleotide metabolic process"/>
    <property type="evidence" value="ECO:0007669"/>
    <property type="project" value="UniProtKB-UniRule"/>
</dbReference>
<dbReference type="CDD" id="cd00381">
    <property type="entry name" value="IMPDH"/>
    <property type="match status" value="1"/>
</dbReference>
<dbReference type="FunFam" id="3.20.20.70:FF:000012">
    <property type="entry name" value="GMP reductase"/>
    <property type="match status" value="1"/>
</dbReference>
<dbReference type="Gene3D" id="3.20.20.70">
    <property type="entry name" value="Aldolase class I"/>
    <property type="match status" value="1"/>
</dbReference>
<dbReference type="HAMAP" id="MF_00596">
    <property type="entry name" value="GMP_reduct_type1"/>
    <property type="match status" value="1"/>
</dbReference>
<dbReference type="InterPro" id="IPR013785">
    <property type="entry name" value="Aldolase_TIM"/>
</dbReference>
<dbReference type="InterPro" id="IPR050139">
    <property type="entry name" value="GMP_reductase"/>
</dbReference>
<dbReference type="InterPro" id="IPR005993">
    <property type="entry name" value="GMPR"/>
</dbReference>
<dbReference type="InterPro" id="IPR015875">
    <property type="entry name" value="IMP_DH/GMP_Rdtase_CS"/>
</dbReference>
<dbReference type="InterPro" id="IPR001093">
    <property type="entry name" value="IMP_DH_GMPRt"/>
</dbReference>
<dbReference type="NCBIfam" id="TIGR01305">
    <property type="entry name" value="GMP_reduct_1"/>
    <property type="match status" value="1"/>
</dbReference>
<dbReference type="NCBIfam" id="NF003470">
    <property type="entry name" value="PRK05096.1"/>
    <property type="match status" value="1"/>
</dbReference>
<dbReference type="PANTHER" id="PTHR43170">
    <property type="entry name" value="GMP REDUCTASE"/>
    <property type="match status" value="1"/>
</dbReference>
<dbReference type="PANTHER" id="PTHR43170:SF5">
    <property type="entry name" value="GMP REDUCTASE"/>
    <property type="match status" value="1"/>
</dbReference>
<dbReference type="Pfam" id="PF00478">
    <property type="entry name" value="IMPDH"/>
    <property type="match status" value="1"/>
</dbReference>
<dbReference type="PIRSF" id="PIRSF000235">
    <property type="entry name" value="GMP_reductase"/>
    <property type="match status" value="1"/>
</dbReference>
<dbReference type="SMART" id="SM01240">
    <property type="entry name" value="IMPDH"/>
    <property type="match status" value="1"/>
</dbReference>
<dbReference type="SUPFAM" id="SSF51412">
    <property type="entry name" value="Inosine monophosphate dehydrogenase (IMPDH)"/>
    <property type="match status" value="1"/>
</dbReference>
<dbReference type="PROSITE" id="PS00487">
    <property type="entry name" value="IMP_DH_GMP_RED"/>
    <property type="match status" value="1"/>
</dbReference>
<proteinExistence type="inferred from homology"/>
<reference key="1">
    <citation type="journal article" date="2009" name="Science">
        <title>The dynamics and time scale of ongoing genomic erosion in symbiotic bacteria.</title>
        <authorList>
            <person name="Moran N.A."/>
            <person name="McLaughlin H.J."/>
            <person name="Sorek R."/>
        </authorList>
    </citation>
    <scope>NUCLEOTIDE SEQUENCE [LARGE SCALE GENOMIC DNA]</scope>
    <source>
        <strain>Tuc7</strain>
    </source>
</reference>
<protein>
    <recommendedName>
        <fullName evidence="1">GMP reductase</fullName>
        <ecNumber evidence="1">1.7.1.7</ecNumber>
    </recommendedName>
    <alternativeName>
        <fullName evidence="1">Guanosine 5'-monophosphate oxidoreductase</fullName>
        <shortName evidence="1">Guanosine monophosphate reductase</shortName>
    </alternativeName>
</protein>
<evidence type="ECO:0000255" key="1">
    <source>
        <dbReference type="HAMAP-Rule" id="MF_00596"/>
    </source>
</evidence>
<gene>
    <name evidence="1" type="primary">guaC</name>
    <name type="ordered locus">BUAPTUC7_203</name>
</gene>
<name>GUAC_BUCAT</name>
<accession>B8D7A8</accession>
<keyword id="KW-0479">Metal-binding</keyword>
<keyword id="KW-0521">NADP</keyword>
<keyword id="KW-0560">Oxidoreductase</keyword>
<keyword id="KW-0630">Potassium</keyword>
<feature type="chain" id="PRO_1000146984" description="GMP reductase">
    <location>
        <begin position="1"/>
        <end position="349"/>
    </location>
</feature>
<feature type="active site" description="Thioimidate intermediate" evidence="1">
    <location>
        <position position="186"/>
    </location>
</feature>
<feature type="binding site" evidence="1">
    <location>
        <begin position="108"/>
        <end position="131"/>
    </location>
    <ligand>
        <name>NADP(+)</name>
        <dbReference type="ChEBI" id="CHEBI:58349"/>
    </ligand>
</feature>
<feature type="binding site" evidence="1">
    <location>
        <position position="181"/>
    </location>
    <ligand>
        <name>K(+)</name>
        <dbReference type="ChEBI" id="CHEBI:29103"/>
    </ligand>
</feature>
<feature type="binding site" evidence="1">
    <location>
        <position position="183"/>
    </location>
    <ligand>
        <name>K(+)</name>
        <dbReference type="ChEBI" id="CHEBI:29103"/>
    </ligand>
</feature>
<feature type="binding site" evidence="1">
    <location>
        <begin position="216"/>
        <end position="239"/>
    </location>
    <ligand>
        <name>NADP(+)</name>
        <dbReference type="ChEBI" id="CHEBI:58349"/>
    </ligand>
</feature>
<comment type="function">
    <text evidence="1">Catalyzes the irreversible NADPH-dependent deamination of GMP to IMP. It functions in the conversion of nucleobase, nucleoside and nucleotide derivatives of G to A nucleotides, and in maintaining the intracellular balance of A and G nucleotides.</text>
</comment>
<comment type="catalytic activity">
    <reaction evidence="1">
        <text>IMP + NH4(+) + NADP(+) = GMP + NADPH + 2 H(+)</text>
        <dbReference type="Rhea" id="RHEA:17185"/>
        <dbReference type="ChEBI" id="CHEBI:15378"/>
        <dbReference type="ChEBI" id="CHEBI:28938"/>
        <dbReference type="ChEBI" id="CHEBI:57783"/>
        <dbReference type="ChEBI" id="CHEBI:58053"/>
        <dbReference type="ChEBI" id="CHEBI:58115"/>
        <dbReference type="ChEBI" id="CHEBI:58349"/>
        <dbReference type="EC" id="1.7.1.7"/>
    </reaction>
</comment>
<comment type="subunit">
    <text evidence="1">Homotetramer.</text>
</comment>
<comment type="similarity">
    <text evidence="1">Belongs to the IMPDH/GMPR family. GuaC type 1 subfamily.</text>
</comment>